<feature type="chain" id="PRO_0000415580" description="Outer envelope pore protein 24, chloroplastic">
    <location>
        <begin position="1"/>
        <end position="224"/>
    </location>
</feature>
<feature type="topological domain" description="Cytoplasmic" evidence="2">
    <location>
        <position position="1"/>
    </location>
</feature>
<feature type="transmembrane region" description="Beta stranded; Name=1" evidence="2">
    <location>
        <begin position="2"/>
        <end position="11"/>
    </location>
</feature>
<feature type="topological domain" description="Chloroplast intermembrane" evidence="2">
    <location>
        <begin position="12"/>
        <end position="16"/>
    </location>
</feature>
<feature type="transmembrane region" description="Beta stranded; Name=2" evidence="2">
    <location>
        <begin position="17"/>
        <end position="28"/>
    </location>
</feature>
<feature type="topological domain" description="Cytoplasmic" evidence="2">
    <location>
        <begin position="29"/>
        <end position="32"/>
    </location>
</feature>
<feature type="transmembrane region" description="Beta stranded; Name=3" evidence="2">
    <location>
        <begin position="33"/>
        <end position="42"/>
    </location>
</feature>
<feature type="topological domain" description="Chloroplast intermembrane" evidence="2">
    <location>
        <begin position="43"/>
        <end position="55"/>
    </location>
</feature>
<feature type="transmembrane region" description="Beta stranded; Name=4" evidence="2">
    <location>
        <begin position="56"/>
        <end position="64"/>
    </location>
</feature>
<feature type="topological domain" description="Cytoplasmic" evidence="2">
    <location>
        <begin position="65"/>
        <end position="70"/>
    </location>
</feature>
<feature type="transmembrane region" description="Beta stranded; Name=5" evidence="2">
    <location>
        <begin position="71"/>
        <end position="80"/>
    </location>
</feature>
<feature type="topological domain" description="Chloroplast intermembrane" evidence="2">
    <location>
        <begin position="81"/>
        <end position="101"/>
    </location>
</feature>
<feature type="transmembrane region" description="Beta stranded; Name=6" evidence="2">
    <location>
        <begin position="102"/>
        <end position="111"/>
    </location>
</feature>
<feature type="topological domain" description="Cytoplasmic" evidence="2">
    <location>
        <begin position="112"/>
        <end position="116"/>
    </location>
</feature>
<feature type="transmembrane region" description="Beta stranded; Name=7" evidence="2">
    <location>
        <begin position="117"/>
        <end position="126"/>
    </location>
</feature>
<feature type="topological domain" description="Chloroplast intermembrane" evidence="2">
    <location>
        <begin position="127"/>
        <end position="130"/>
    </location>
</feature>
<feature type="transmembrane region" description="Beta stranded; Name=8" evidence="2">
    <location>
        <begin position="131"/>
        <end position="140"/>
    </location>
</feature>
<feature type="topological domain" description="Cytoplasmic" evidence="2">
    <location>
        <begin position="141"/>
        <end position="154"/>
    </location>
</feature>
<feature type="transmembrane region" description="Beta stranded; Name=9" evidence="2">
    <location>
        <begin position="155"/>
        <end position="166"/>
    </location>
</feature>
<feature type="topological domain" description="Chloroplast intermembrane" evidence="2">
    <location>
        <begin position="167"/>
        <end position="169"/>
    </location>
</feature>
<feature type="transmembrane region" description="Beta stranded; Name=10" evidence="2">
    <location>
        <begin position="170"/>
        <end position="178"/>
    </location>
</feature>
<feature type="topological domain" description="Cytoplasmic" evidence="2">
    <location>
        <begin position="179"/>
        <end position="180"/>
    </location>
</feature>
<feature type="transmembrane region" description="Beta stranded; Name=11" evidence="2">
    <location>
        <begin position="181"/>
        <end position="189"/>
    </location>
</feature>
<feature type="topological domain" description="Chloroplast intermembrane" evidence="2">
    <location>
        <begin position="190"/>
        <end position="212"/>
    </location>
</feature>
<feature type="transmembrane region" description="Beta stranded; Name=12" evidence="2">
    <location>
        <begin position="213"/>
        <end position="222"/>
    </location>
</feature>
<feature type="topological domain" description="Cytoplasmic" evidence="2">
    <location>
        <begin position="223"/>
        <end position="224"/>
    </location>
</feature>
<name>OEP24_ORYSJ</name>
<gene>
    <name type="primary">OEP24</name>
    <name type="ordered locus">Os03g0855600</name>
    <name type="ordered locus">LOC_Os03g63860</name>
    <name type="ORF">OsJ_13425</name>
</gene>
<reference key="1">
    <citation type="journal article" date="2005" name="Genome Res.">
        <title>Sequence, annotation, and analysis of synteny between rice chromosome 3 and diverged grass species.</title>
        <authorList>
            <consortium name="The rice chromosome 3 sequencing consortium"/>
            <person name="Buell C.R."/>
            <person name="Yuan Q."/>
            <person name="Ouyang S."/>
            <person name="Liu J."/>
            <person name="Zhu W."/>
            <person name="Wang A."/>
            <person name="Maiti R."/>
            <person name="Haas B."/>
            <person name="Wortman J."/>
            <person name="Pertea M."/>
            <person name="Jones K.M."/>
            <person name="Kim M."/>
            <person name="Overton L."/>
            <person name="Tsitrin T."/>
            <person name="Fadrosh D."/>
            <person name="Bera J."/>
            <person name="Weaver B."/>
            <person name="Jin S."/>
            <person name="Johri S."/>
            <person name="Reardon M."/>
            <person name="Webb K."/>
            <person name="Hill J."/>
            <person name="Moffat K."/>
            <person name="Tallon L."/>
            <person name="Van Aken S."/>
            <person name="Lewis M."/>
            <person name="Utterback T."/>
            <person name="Feldblyum T."/>
            <person name="Zismann V."/>
            <person name="Iobst S."/>
            <person name="Hsiao J."/>
            <person name="de Vazeille A.R."/>
            <person name="Salzberg S.L."/>
            <person name="White O."/>
            <person name="Fraser C.M."/>
            <person name="Yu Y."/>
            <person name="Kim H."/>
            <person name="Rambo T."/>
            <person name="Currie J."/>
            <person name="Collura K."/>
            <person name="Kernodle-Thompson S."/>
            <person name="Wei F."/>
            <person name="Kudrna K."/>
            <person name="Ammiraju J.S.S."/>
            <person name="Luo M."/>
            <person name="Goicoechea J.L."/>
            <person name="Wing R.A."/>
            <person name="Henry D."/>
            <person name="Oates R."/>
            <person name="Palmer M."/>
            <person name="Pries G."/>
            <person name="Saski C."/>
            <person name="Simmons J."/>
            <person name="Soderlund C."/>
            <person name="Nelson W."/>
            <person name="de la Bastide M."/>
            <person name="Spiegel L."/>
            <person name="Nascimento L."/>
            <person name="Huang E."/>
            <person name="Preston R."/>
            <person name="Zutavern T."/>
            <person name="Palmer L."/>
            <person name="O'Shaughnessy A."/>
            <person name="Dike S."/>
            <person name="McCombie W.R."/>
            <person name="Minx P."/>
            <person name="Cordum H."/>
            <person name="Wilson R."/>
            <person name="Jin W."/>
            <person name="Lee H.R."/>
            <person name="Jiang J."/>
            <person name="Jackson S."/>
        </authorList>
    </citation>
    <scope>NUCLEOTIDE SEQUENCE [LARGE SCALE GENOMIC DNA]</scope>
    <source>
        <strain>cv. Nipponbare</strain>
    </source>
</reference>
<reference key="2">
    <citation type="journal article" date="2005" name="Nature">
        <title>The map-based sequence of the rice genome.</title>
        <authorList>
            <consortium name="International rice genome sequencing project (IRGSP)"/>
        </authorList>
    </citation>
    <scope>NUCLEOTIDE SEQUENCE [LARGE SCALE GENOMIC DNA]</scope>
    <source>
        <strain>cv. Nipponbare</strain>
    </source>
</reference>
<reference key="3">
    <citation type="journal article" date="2008" name="Nucleic Acids Res.">
        <title>The rice annotation project database (RAP-DB): 2008 update.</title>
        <authorList>
            <consortium name="The rice annotation project (RAP)"/>
        </authorList>
    </citation>
    <scope>GENOME REANNOTATION</scope>
    <source>
        <strain>cv. Nipponbare</strain>
    </source>
</reference>
<reference key="4">
    <citation type="journal article" date="2013" name="Rice">
        <title>Improvement of the Oryza sativa Nipponbare reference genome using next generation sequence and optical map data.</title>
        <authorList>
            <person name="Kawahara Y."/>
            <person name="de la Bastide M."/>
            <person name="Hamilton J.P."/>
            <person name="Kanamori H."/>
            <person name="McCombie W.R."/>
            <person name="Ouyang S."/>
            <person name="Schwartz D.C."/>
            <person name="Tanaka T."/>
            <person name="Wu J."/>
            <person name="Zhou S."/>
            <person name="Childs K.L."/>
            <person name="Davidson R.M."/>
            <person name="Lin H."/>
            <person name="Quesada-Ocampo L."/>
            <person name="Vaillancourt B."/>
            <person name="Sakai H."/>
            <person name="Lee S.S."/>
            <person name="Kim J."/>
            <person name="Numa H."/>
            <person name="Itoh T."/>
            <person name="Buell C.R."/>
            <person name="Matsumoto T."/>
        </authorList>
    </citation>
    <scope>GENOME REANNOTATION</scope>
    <source>
        <strain>cv. Nipponbare</strain>
    </source>
</reference>
<reference key="5">
    <citation type="journal article" date="2005" name="PLoS Biol.">
        <title>The genomes of Oryza sativa: a history of duplications.</title>
        <authorList>
            <person name="Yu J."/>
            <person name="Wang J."/>
            <person name="Lin W."/>
            <person name="Li S."/>
            <person name="Li H."/>
            <person name="Zhou J."/>
            <person name="Ni P."/>
            <person name="Dong W."/>
            <person name="Hu S."/>
            <person name="Zeng C."/>
            <person name="Zhang J."/>
            <person name="Zhang Y."/>
            <person name="Li R."/>
            <person name="Xu Z."/>
            <person name="Li S."/>
            <person name="Li X."/>
            <person name="Zheng H."/>
            <person name="Cong L."/>
            <person name="Lin L."/>
            <person name="Yin J."/>
            <person name="Geng J."/>
            <person name="Li G."/>
            <person name="Shi J."/>
            <person name="Liu J."/>
            <person name="Lv H."/>
            <person name="Li J."/>
            <person name="Wang J."/>
            <person name="Deng Y."/>
            <person name="Ran L."/>
            <person name="Shi X."/>
            <person name="Wang X."/>
            <person name="Wu Q."/>
            <person name="Li C."/>
            <person name="Ren X."/>
            <person name="Wang J."/>
            <person name="Wang X."/>
            <person name="Li D."/>
            <person name="Liu D."/>
            <person name="Zhang X."/>
            <person name="Ji Z."/>
            <person name="Zhao W."/>
            <person name="Sun Y."/>
            <person name="Zhang Z."/>
            <person name="Bao J."/>
            <person name="Han Y."/>
            <person name="Dong L."/>
            <person name="Ji J."/>
            <person name="Chen P."/>
            <person name="Wu S."/>
            <person name="Liu J."/>
            <person name="Xiao Y."/>
            <person name="Bu D."/>
            <person name="Tan J."/>
            <person name="Yang L."/>
            <person name="Ye C."/>
            <person name="Zhang J."/>
            <person name="Xu J."/>
            <person name="Zhou Y."/>
            <person name="Yu Y."/>
            <person name="Zhang B."/>
            <person name="Zhuang S."/>
            <person name="Wei H."/>
            <person name="Liu B."/>
            <person name="Lei M."/>
            <person name="Yu H."/>
            <person name="Li Y."/>
            <person name="Xu H."/>
            <person name="Wei S."/>
            <person name="He X."/>
            <person name="Fang L."/>
            <person name="Zhang Z."/>
            <person name="Zhang Y."/>
            <person name="Huang X."/>
            <person name="Su Z."/>
            <person name="Tong W."/>
            <person name="Li J."/>
            <person name="Tong Z."/>
            <person name="Li S."/>
            <person name="Ye J."/>
            <person name="Wang L."/>
            <person name="Fang L."/>
            <person name="Lei T."/>
            <person name="Chen C.-S."/>
            <person name="Chen H.-C."/>
            <person name="Xu Z."/>
            <person name="Li H."/>
            <person name="Huang H."/>
            <person name="Zhang F."/>
            <person name="Xu H."/>
            <person name="Li N."/>
            <person name="Zhao C."/>
            <person name="Li S."/>
            <person name="Dong L."/>
            <person name="Huang Y."/>
            <person name="Li L."/>
            <person name="Xi Y."/>
            <person name="Qi Q."/>
            <person name="Li W."/>
            <person name="Zhang B."/>
            <person name="Hu W."/>
            <person name="Zhang Y."/>
            <person name="Tian X."/>
            <person name="Jiao Y."/>
            <person name="Liang X."/>
            <person name="Jin J."/>
            <person name="Gao L."/>
            <person name="Zheng W."/>
            <person name="Hao B."/>
            <person name="Liu S.-M."/>
            <person name="Wang W."/>
            <person name="Yuan L."/>
            <person name="Cao M."/>
            <person name="McDermott J."/>
            <person name="Samudrala R."/>
            <person name="Wang J."/>
            <person name="Wong G.K.-S."/>
            <person name="Yang H."/>
        </authorList>
    </citation>
    <scope>NUCLEOTIDE SEQUENCE [LARGE SCALE GENOMIC DNA]</scope>
    <source>
        <strain>cv. Nipponbare</strain>
    </source>
</reference>
<reference key="6">
    <citation type="journal article" date="2003" name="Science">
        <title>Collection, mapping, and annotation of over 28,000 cDNA clones from japonica rice.</title>
        <authorList>
            <consortium name="The rice full-length cDNA consortium"/>
        </authorList>
    </citation>
    <scope>NUCLEOTIDE SEQUENCE [LARGE SCALE MRNA]</scope>
    <source>
        <strain>cv. Nipponbare</strain>
    </source>
</reference>
<comment type="function">
    <text evidence="1">High-conductance voltage-dependent solute channel with a slight selectivity for cations transporting triosephosphates, dicarboxylic acids, ATP, inorganic phosphate (Pi), sugars, and positively or negatively charged amino acids.</text>
</comment>
<comment type="subunit">
    <text evidence="1">Homooligomers form large rather nonselective pores in plastidial outer membranes.</text>
</comment>
<comment type="subcellular location">
    <subcellularLocation>
        <location evidence="1">Plastid</location>
        <location evidence="1">Etioplast membrane</location>
        <topology evidence="1">Multi-pass membrane protein</topology>
    </subcellularLocation>
    <subcellularLocation>
        <location evidence="1">Plastid</location>
        <location evidence="1">Chloroplast outer membrane</location>
        <topology evidence="1">Multi-pass membrane protein</topology>
    </subcellularLocation>
    <text evidence="1">Present in non-green root plastids.</text>
</comment>
<comment type="similarity">
    <text evidence="3">Belongs to the plastid outer envelope porin OEP24 (TC 1.B.28.1) family.</text>
</comment>
<keyword id="KW-0150">Chloroplast</keyword>
<keyword id="KW-0406">Ion transport</keyword>
<keyword id="KW-0472">Membrane</keyword>
<keyword id="KW-0934">Plastid</keyword>
<keyword id="KW-1002">Plastid outer membrane</keyword>
<keyword id="KW-0626">Porin</keyword>
<keyword id="KW-1185">Reference proteome</keyword>
<keyword id="KW-0812">Transmembrane</keyword>
<keyword id="KW-1134">Transmembrane beta strand</keyword>
<keyword id="KW-0813">Transport</keyword>
<proteinExistence type="evidence at transcript level"/>
<evidence type="ECO:0000250" key="1"/>
<evidence type="ECO:0000255" key="2"/>
<evidence type="ECO:0000305" key="3"/>
<protein>
    <recommendedName>
        <fullName>Outer envelope pore protein 24, chloroplastic</fullName>
    </recommendedName>
    <alternativeName>
        <fullName>Chloroplastic outer envelope pore protein of 24 kDa</fullName>
    </alternativeName>
</protein>
<accession>Q75IQ4</accession>
<accession>A0A0P0W5M1</accession>
<dbReference type="EMBL" id="AC128647">
    <property type="protein sequence ID" value="AAS01981.1"/>
    <property type="molecule type" value="Genomic_DNA"/>
</dbReference>
<dbReference type="EMBL" id="DP000009">
    <property type="protein sequence ID" value="ABF99978.1"/>
    <property type="molecule type" value="Genomic_DNA"/>
</dbReference>
<dbReference type="EMBL" id="AP008209">
    <property type="protein sequence ID" value="BAF13857.1"/>
    <property type="molecule type" value="Genomic_DNA"/>
</dbReference>
<dbReference type="EMBL" id="AP014959">
    <property type="protein sequence ID" value="BAS87435.1"/>
    <property type="molecule type" value="Genomic_DNA"/>
</dbReference>
<dbReference type="EMBL" id="CM000140">
    <property type="protein sequence ID" value="EEE60328.1"/>
    <property type="molecule type" value="Genomic_DNA"/>
</dbReference>
<dbReference type="EMBL" id="AK067858">
    <property type="protein sequence ID" value="BAG90641.1"/>
    <property type="molecule type" value="mRNA"/>
</dbReference>
<dbReference type="RefSeq" id="XP_015631663.1">
    <property type="nucleotide sequence ID" value="XM_015776177.1"/>
</dbReference>
<dbReference type="FunCoup" id="Q75IQ4">
    <property type="interactions" value="1826"/>
</dbReference>
<dbReference type="STRING" id="39947.Q75IQ4"/>
<dbReference type="PaxDb" id="39947-Q75IQ4"/>
<dbReference type="EnsemblPlants" id="Os03t0855600-01">
    <property type="protein sequence ID" value="Os03t0855600-01"/>
    <property type="gene ID" value="Os03g0855600"/>
</dbReference>
<dbReference type="EnsemblPlants" id="Os03t0855600-02">
    <property type="protein sequence ID" value="Os03t0855600-02"/>
    <property type="gene ID" value="Os03g0855600"/>
</dbReference>
<dbReference type="Gramene" id="Os03t0855600-01">
    <property type="protein sequence ID" value="Os03t0855600-01"/>
    <property type="gene ID" value="Os03g0855600"/>
</dbReference>
<dbReference type="Gramene" id="Os03t0855600-02">
    <property type="protein sequence ID" value="Os03t0855600-02"/>
    <property type="gene ID" value="Os03g0855600"/>
</dbReference>
<dbReference type="KEGG" id="dosa:Os03g0855600"/>
<dbReference type="eggNOG" id="ENOG502QUHD">
    <property type="taxonomic scope" value="Eukaryota"/>
</dbReference>
<dbReference type="HOGENOM" id="CLU_077010_0_0_1"/>
<dbReference type="InParanoid" id="Q75IQ4"/>
<dbReference type="OMA" id="AESTWNF"/>
<dbReference type="OrthoDB" id="1185978at2759"/>
<dbReference type="Proteomes" id="UP000000763">
    <property type="component" value="Chromosome 3"/>
</dbReference>
<dbReference type="Proteomes" id="UP000007752">
    <property type="component" value="Chromosome 3"/>
</dbReference>
<dbReference type="Proteomes" id="UP000059680">
    <property type="component" value="Chromosome 3"/>
</dbReference>
<dbReference type="GO" id="GO:0009707">
    <property type="term" value="C:chloroplast outer membrane"/>
    <property type="evidence" value="ECO:0007669"/>
    <property type="project" value="UniProtKB-SubCell"/>
</dbReference>
<dbReference type="GO" id="GO:0034426">
    <property type="term" value="C:etioplast membrane"/>
    <property type="evidence" value="ECO:0007669"/>
    <property type="project" value="UniProtKB-SubCell"/>
</dbReference>
<dbReference type="GO" id="GO:0046930">
    <property type="term" value="C:pore complex"/>
    <property type="evidence" value="ECO:0007669"/>
    <property type="project" value="UniProtKB-KW"/>
</dbReference>
<dbReference type="GO" id="GO:0015288">
    <property type="term" value="F:porin activity"/>
    <property type="evidence" value="ECO:0007669"/>
    <property type="project" value="UniProtKB-KW"/>
</dbReference>
<dbReference type="GO" id="GO:0022843">
    <property type="term" value="F:voltage-gated monoatomic cation channel activity"/>
    <property type="evidence" value="ECO:0007669"/>
    <property type="project" value="InterPro"/>
</dbReference>
<dbReference type="GO" id="GO:0034765">
    <property type="term" value="P:regulation of monoatomic ion transmembrane transport"/>
    <property type="evidence" value="ECO:0007669"/>
    <property type="project" value="InterPro"/>
</dbReference>
<dbReference type="InterPro" id="IPR034626">
    <property type="entry name" value="OEP24"/>
</dbReference>
<dbReference type="PANTHER" id="PTHR35284">
    <property type="entry name" value="OUTER ENVELOPE PORE PROTEIN 24A, CHLOROPLASTIC-RELATED"/>
    <property type="match status" value="1"/>
</dbReference>
<dbReference type="PANTHER" id="PTHR35284:SF1">
    <property type="entry name" value="OUTER ENVELOPE PORE PROTEIN 24A, CHLOROPLASTIC-RELATED"/>
    <property type="match status" value="1"/>
</dbReference>
<organism>
    <name type="scientific">Oryza sativa subsp. japonica</name>
    <name type="common">Rice</name>
    <dbReference type="NCBI Taxonomy" id="39947"/>
    <lineage>
        <taxon>Eukaryota</taxon>
        <taxon>Viridiplantae</taxon>
        <taxon>Streptophyta</taxon>
        <taxon>Embryophyta</taxon>
        <taxon>Tracheophyta</taxon>
        <taxon>Spermatophyta</taxon>
        <taxon>Magnoliopsida</taxon>
        <taxon>Liliopsida</taxon>
        <taxon>Poales</taxon>
        <taxon>Poaceae</taxon>
        <taxon>BOP clade</taxon>
        <taxon>Oryzoideae</taxon>
        <taxon>Oryzeae</taxon>
        <taxon>Oryzinae</taxon>
        <taxon>Oryza</taxon>
        <taxon>Oryza sativa</taxon>
    </lineage>
</organism>
<sequence length="224" mass="24234">MKATVKGRYEGDKATAAATLAFTPSAADLRFKASATDAAFARGPSLEGLILTLEKPGSFLLDLKPHSKDVRFQFMNSALLLDRRVSLTYTHSTTLSPGPAKLPARTALDGSLTFDPANKLSLSHTLGSSGCRVKYSYAHGQDRLTTIEPCFDTANNAWDFAVTRKFQGGDAIKATYQASTKLLALDWTRDSKIGASFKVAASFDLSDQSKAPKLIAESTWNYEI</sequence>